<protein>
    <recommendedName>
        <fullName evidence="1">PAN2-PAN3 deadenylation complex subunit pan3</fullName>
    </recommendedName>
    <alternativeName>
        <fullName evidence="1">PAB1P-dependent poly(A)-specific ribonuclease</fullName>
    </alternativeName>
    <alternativeName>
        <fullName evidence="1">Poly(A)-nuclease deadenylation complex subunit 3</fullName>
        <shortName evidence="1">PAN deadenylation complex subunit 3</shortName>
    </alternativeName>
</protein>
<evidence type="ECO:0000255" key="1">
    <source>
        <dbReference type="HAMAP-Rule" id="MF_03181"/>
    </source>
</evidence>
<evidence type="ECO:0000256" key="2">
    <source>
        <dbReference type="SAM" id="MobiDB-lite"/>
    </source>
</evidence>
<evidence type="ECO:0000269" key="3">
    <source>
    </source>
</evidence>
<evidence type="ECO:0000305" key="4"/>
<keyword id="KW-0067">ATP-binding</keyword>
<keyword id="KW-0175">Coiled coil</keyword>
<keyword id="KW-0963">Cytoplasm</keyword>
<keyword id="KW-0479">Metal-binding</keyword>
<keyword id="KW-0507">mRNA processing</keyword>
<keyword id="KW-0547">Nucleotide-binding</keyword>
<keyword id="KW-0539">Nucleus</keyword>
<keyword id="KW-1185">Reference proteome</keyword>
<keyword id="KW-0862">Zinc</keyword>
<keyword id="KW-0863">Zinc-finger</keyword>
<gene>
    <name type="primary">ppk26</name>
    <name evidence="1" type="synonym">pan3</name>
    <name type="ORF">SPBC336.14c</name>
</gene>
<feature type="chain" id="PRO_0000256831" description="PAN2-PAN3 deadenylation complex subunit pan3">
    <location>
        <begin position="1"/>
        <end position="589"/>
    </location>
</feature>
<feature type="zinc finger region" description="C3H1-type" evidence="1">
    <location>
        <begin position="34"/>
        <end position="63"/>
    </location>
</feature>
<feature type="region of interest" description="Disordered" evidence="2">
    <location>
        <begin position="1"/>
        <end position="32"/>
    </location>
</feature>
<feature type="region of interest" description="Pseudokinase domain" evidence="1">
    <location>
        <begin position="201"/>
        <end position="457"/>
    </location>
</feature>
<feature type="region of interest" description="Knob domain" evidence="1">
    <location>
        <begin position="497"/>
        <end position="589"/>
    </location>
</feature>
<feature type="coiled-coil region" evidence="1">
    <location>
        <begin position="458"/>
        <end position="496"/>
    </location>
</feature>
<feature type="short sequence motif" description="PABPC-interacting motif-2 (PAM-2)" evidence="4">
    <location>
        <begin position="74"/>
        <end position="94"/>
    </location>
</feature>
<feature type="binding site" evidence="1">
    <location>
        <position position="255"/>
    </location>
    <ligand>
        <name>ATP</name>
        <dbReference type="ChEBI" id="CHEBI:30616"/>
    </ligand>
</feature>
<feature type="binding site" evidence="1">
    <location>
        <begin position="302"/>
        <end position="309"/>
    </location>
    <ligand>
        <name>ATP</name>
        <dbReference type="ChEBI" id="CHEBI:30616"/>
    </ligand>
</feature>
<accession>Q9UST1</accession>
<sequence>MSVRKNSPASPKPTSRSRESSRSPSVTDLKDHSKAKRTLCRNILLYGSCKHSENGCAFRHDGPFIPSSENLEQYSVKKKLNAASASFQPVRALPVKAAGAAVFVPKSQEKSLFLSRERTPVALSPGSHAINPYNNASMLVNEPFHDDSGVYYTRQNQFKPTLYNLYNPQPSPMPTLLPYERTVNGLFIDDTTRERIERKSEASRQTISALPSIISSYTSLAPLNTKLYRYKEQIGFSSWTYKCTSSIDGNAYVLKRLQDCSINIDTSTVDKLKNVFHPNIVPFHSAFHTDTFHDSSLLLIYDFYPCTTTLGELYLNNSKNSVKLEENRKIPERELWNYFFQLTIALSYLHKSGFACNKLTPSRILVDQTERIRISGCADYELVVSNKPPLEERKKQDFVDLGVVIANLATGRTDMDMSSAARAIYSTYSREFYKAVLYFVSEVPEDKNLELFLQNHIESFFPIMSSPYVECEKMERKISDAFQHGRFFNILCKIMFIIDNNRASREYPIAREKEISLIYLLRDYLFHQIDEDECPVIDLYQVLNRLGKLDAGINQAIALISRDELDCVSVSYGELKAWLDNVYEMEINS</sequence>
<name>PAN3_SCHPO</name>
<dbReference type="EMBL" id="CU329671">
    <property type="protein sequence ID" value="CAB58166.1"/>
    <property type="molecule type" value="Genomic_DNA"/>
</dbReference>
<dbReference type="PIR" id="T40252">
    <property type="entry name" value="T40252"/>
</dbReference>
<dbReference type="RefSeq" id="NP_596134.1">
    <property type="nucleotide sequence ID" value="NM_001022052.2"/>
</dbReference>
<dbReference type="SMR" id="Q9UST1"/>
<dbReference type="BioGRID" id="276763">
    <property type="interactions" value="47"/>
</dbReference>
<dbReference type="FunCoup" id="Q9UST1">
    <property type="interactions" value="104"/>
</dbReference>
<dbReference type="STRING" id="284812.Q9UST1"/>
<dbReference type="iPTMnet" id="Q9UST1"/>
<dbReference type="PaxDb" id="4896-SPBC336.14c.1"/>
<dbReference type="EnsemblFungi" id="SPBC336.14c.1">
    <property type="protein sequence ID" value="SPBC336.14c.1:pep"/>
    <property type="gene ID" value="SPBC336.14c"/>
</dbReference>
<dbReference type="GeneID" id="2540231"/>
<dbReference type="KEGG" id="spo:2540231"/>
<dbReference type="PomBase" id="SPBC336.14c">
    <property type="gene designation" value="ppk26"/>
</dbReference>
<dbReference type="VEuPathDB" id="FungiDB:SPBC336.14c"/>
<dbReference type="eggNOG" id="KOG3741">
    <property type="taxonomic scope" value="Eukaryota"/>
</dbReference>
<dbReference type="HOGENOM" id="CLU_016423_1_0_1"/>
<dbReference type="InParanoid" id="Q9UST1"/>
<dbReference type="OMA" id="INCCSVF"/>
<dbReference type="PhylomeDB" id="Q9UST1"/>
<dbReference type="PRO" id="PR:Q9UST1"/>
<dbReference type="Proteomes" id="UP000002485">
    <property type="component" value="Chromosome II"/>
</dbReference>
<dbReference type="GO" id="GO:0005829">
    <property type="term" value="C:cytosol"/>
    <property type="evidence" value="ECO:0007005"/>
    <property type="project" value="PomBase"/>
</dbReference>
<dbReference type="GO" id="GO:0005634">
    <property type="term" value="C:nucleus"/>
    <property type="evidence" value="ECO:0007005"/>
    <property type="project" value="PomBase"/>
</dbReference>
<dbReference type="GO" id="GO:0000932">
    <property type="term" value="C:P-body"/>
    <property type="evidence" value="ECO:0000318"/>
    <property type="project" value="GO_Central"/>
</dbReference>
<dbReference type="GO" id="GO:0031251">
    <property type="term" value="C:PAN complex"/>
    <property type="evidence" value="ECO:0000318"/>
    <property type="project" value="GO_Central"/>
</dbReference>
<dbReference type="GO" id="GO:0005524">
    <property type="term" value="F:ATP binding"/>
    <property type="evidence" value="ECO:0007669"/>
    <property type="project" value="UniProtKB-UniRule"/>
</dbReference>
<dbReference type="GO" id="GO:0008143">
    <property type="term" value="F:poly(A) binding"/>
    <property type="evidence" value="ECO:0000318"/>
    <property type="project" value="GO_Central"/>
</dbReference>
<dbReference type="GO" id="GO:0004672">
    <property type="term" value="F:protein kinase activity"/>
    <property type="evidence" value="ECO:0007669"/>
    <property type="project" value="InterPro"/>
</dbReference>
<dbReference type="GO" id="GO:0008270">
    <property type="term" value="F:zinc ion binding"/>
    <property type="evidence" value="ECO:0007669"/>
    <property type="project" value="UniProtKB-KW"/>
</dbReference>
<dbReference type="GO" id="GO:0006397">
    <property type="term" value="P:mRNA processing"/>
    <property type="evidence" value="ECO:0007669"/>
    <property type="project" value="UniProtKB-KW"/>
</dbReference>
<dbReference type="GO" id="GO:0000289">
    <property type="term" value="P:nuclear-transcribed mRNA poly(A) tail shortening"/>
    <property type="evidence" value="ECO:0000318"/>
    <property type="project" value="GO_Central"/>
</dbReference>
<dbReference type="Gene3D" id="1.10.287.3700">
    <property type="match status" value="1"/>
</dbReference>
<dbReference type="Gene3D" id="6.10.250.3160">
    <property type="match status" value="1"/>
</dbReference>
<dbReference type="Gene3D" id="1.10.510.10">
    <property type="entry name" value="Transferase(Phosphotransferase) domain 1"/>
    <property type="match status" value="1"/>
</dbReference>
<dbReference type="HAMAP" id="MF_03181">
    <property type="entry name" value="PAN3"/>
    <property type="match status" value="1"/>
</dbReference>
<dbReference type="InterPro" id="IPR011009">
    <property type="entry name" value="Kinase-like_dom_sf"/>
</dbReference>
<dbReference type="InterPro" id="IPR030844">
    <property type="entry name" value="PAN3"/>
</dbReference>
<dbReference type="InterPro" id="IPR041332">
    <property type="entry name" value="Pan3_PK"/>
</dbReference>
<dbReference type="InterPro" id="IPR000719">
    <property type="entry name" value="Prot_kinase_dom"/>
</dbReference>
<dbReference type="InterPro" id="IPR000571">
    <property type="entry name" value="Znf_CCCH"/>
</dbReference>
<dbReference type="PANTHER" id="PTHR12272">
    <property type="entry name" value="DEADENYLATION COMPLEX SUBUNIT PAN3"/>
    <property type="match status" value="1"/>
</dbReference>
<dbReference type="PANTHER" id="PTHR12272:SF11">
    <property type="entry name" value="PAN2-PAN3 DEADENYLATION COMPLEX SUBUNIT PAN3"/>
    <property type="match status" value="1"/>
</dbReference>
<dbReference type="Pfam" id="PF18101">
    <property type="entry name" value="Pan3_PK"/>
    <property type="match status" value="1"/>
</dbReference>
<dbReference type="Pfam" id="PF00069">
    <property type="entry name" value="Pkinase"/>
    <property type="match status" value="1"/>
</dbReference>
<dbReference type="SMART" id="SM00220">
    <property type="entry name" value="S_TKc"/>
    <property type="match status" value="1"/>
</dbReference>
<dbReference type="SUPFAM" id="SSF56112">
    <property type="entry name" value="Protein kinase-like (PK-like)"/>
    <property type="match status" value="1"/>
</dbReference>
<dbReference type="PROSITE" id="PS50011">
    <property type="entry name" value="PROTEIN_KINASE_DOM"/>
    <property type="match status" value="1"/>
</dbReference>
<dbReference type="PROSITE" id="PS50103">
    <property type="entry name" value="ZF_C3H1"/>
    <property type="match status" value="1"/>
</dbReference>
<reference key="1">
    <citation type="journal article" date="2002" name="Nature">
        <title>The genome sequence of Schizosaccharomyces pombe.</title>
        <authorList>
            <person name="Wood V."/>
            <person name="Gwilliam R."/>
            <person name="Rajandream M.A."/>
            <person name="Lyne M.H."/>
            <person name="Lyne R."/>
            <person name="Stewart A."/>
            <person name="Sgouros J.G."/>
            <person name="Peat N."/>
            <person name="Hayles J."/>
            <person name="Baker S.G."/>
            <person name="Basham D."/>
            <person name="Bowman S."/>
            <person name="Brooks K."/>
            <person name="Brown D."/>
            <person name="Brown S."/>
            <person name="Chillingworth T."/>
            <person name="Churcher C.M."/>
            <person name="Collins M."/>
            <person name="Connor R."/>
            <person name="Cronin A."/>
            <person name="Davis P."/>
            <person name="Feltwell T."/>
            <person name="Fraser A."/>
            <person name="Gentles S."/>
            <person name="Goble A."/>
            <person name="Hamlin N."/>
            <person name="Harris D.E."/>
            <person name="Hidalgo J."/>
            <person name="Hodgson G."/>
            <person name="Holroyd S."/>
            <person name="Hornsby T."/>
            <person name="Howarth S."/>
            <person name="Huckle E.J."/>
            <person name="Hunt S."/>
            <person name="Jagels K."/>
            <person name="James K.D."/>
            <person name="Jones L."/>
            <person name="Jones M."/>
            <person name="Leather S."/>
            <person name="McDonald S."/>
            <person name="McLean J."/>
            <person name="Mooney P."/>
            <person name="Moule S."/>
            <person name="Mungall K.L."/>
            <person name="Murphy L.D."/>
            <person name="Niblett D."/>
            <person name="Odell C."/>
            <person name="Oliver K."/>
            <person name="O'Neil S."/>
            <person name="Pearson D."/>
            <person name="Quail M.A."/>
            <person name="Rabbinowitsch E."/>
            <person name="Rutherford K.M."/>
            <person name="Rutter S."/>
            <person name="Saunders D."/>
            <person name="Seeger K."/>
            <person name="Sharp S."/>
            <person name="Skelton J."/>
            <person name="Simmonds M.N."/>
            <person name="Squares R."/>
            <person name="Squares S."/>
            <person name="Stevens K."/>
            <person name="Taylor K."/>
            <person name="Taylor R.G."/>
            <person name="Tivey A."/>
            <person name="Walsh S.V."/>
            <person name="Warren T."/>
            <person name="Whitehead S."/>
            <person name="Woodward J.R."/>
            <person name="Volckaert G."/>
            <person name="Aert R."/>
            <person name="Robben J."/>
            <person name="Grymonprez B."/>
            <person name="Weltjens I."/>
            <person name="Vanstreels E."/>
            <person name="Rieger M."/>
            <person name="Schaefer M."/>
            <person name="Mueller-Auer S."/>
            <person name="Gabel C."/>
            <person name="Fuchs M."/>
            <person name="Duesterhoeft A."/>
            <person name="Fritzc C."/>
            <person name="Holzer E."/>
            <person name="Moestl D."/>
            <person name="Hilbert H."/>
            <person name="Borzym K."/>
            <person name="Langer I."/>
            <person name="Beck A."/>
            <person name="Lehrach H."/>
            <person name="Reinhardt R."/>
            <person name="Pohl T.M."/>
            <person name="Eger P."/>
            <person name="Zimmermann W."/>
            <person name="Wedler H."/>
            <person name="Wambutt R."/>
            <person name="Purnelle B."/>
            <person name="Goffeau A."/>
            <person name="Cadieu E."/>
            <person name="Dreano S."/>
            <person name="Gloux S."/>
            <person name="Lelaure V."/>
            <person name="Mottier S."/>
            <person name="Galibert F."/>
            <person name="Aves S.J."/>
            <person name="Xiang Z."/>
            <person name="Hunt C."/>
            <person name="Moore K."/>
            <person name="Hurst S.M."/>
            <person name="Lucas M."/>
            <person name="Rochet M."/>
            <person name="Gaillardin C."/>
            <person name="Tallada V.A."/>
            <person name="Garzon A."/>
            <person name="Thode G."/>
            <person name="Daga R.R."/>
            <person name="Cruzado L."/>
            <person name="Jimenez J."/>
            <person name="Sanchez M."/>
            <person name="del Rey F."/>
            <person name="Benito J."/>
            <person name="Dominguez A."/>
            <person name="Revuelta J.L."/>
            <person name="Moreno S."/>
            <person name="Armstrong J."/>
            <person name="Forsburg S.L."/>
            <person name="Cerutti L."/>
            <person name="Lowe T."/>
            <person name="McCombie W.R."/>
            <person name="Paulsen I."/>
            <person name="Potashkin J."/>
            <person name="Shpakovski G.V."/>
            <person name="Ussery D."/>
            <person name="Barrell B.G."/>
            <person name="Nurse P."/>
        </authorList>
    </citation>
    <scope>NUCLEOTIDE SEQUENCE [LARGE SCALE GENOMIC DNA]</scope>
    <source>
        <strain>972 / ATCC 24843</strain>
    </source>
</reference>
<reference key="2">
    <citation type="journal article" date="2006" name="Nat. Biotechnol.">
        <title>ORFeome cloning and global analysis of protein localization in the fission yeast Schizosaccharomyces pombe.</title>
        <authorList>
            <person name="Matsuyama A."/>
            <person name="Arai R."/>
            <person name="Yashiroda Y."/>
            <person name="Shirai A."/>
            <person name="Kamata A."/>
            <person name="Sekido S."/>
            <person name="Kobayashi Y."/>
            <person name="Hashimoto A."/>
            <person name="Hamamoto M."/>
            <person name="Hiraoka Y."/>
            <person name="Horinouchi S."/>
            <person name="Yoshida M."/>
        </authorList>
    </citation>
    <scope>SUBCELLULAR LOCATION [LARGE SCALE ANALYSIS]</scope>
</reference>
<comment type="function">
    <text evidence="1">Regulatory subunit of the poly(A)-nuclease (PAN) deadenylation complex, one of two cytoplasmic mRNA deadenylases involved in mRNA turnover. PAN specifically shortens poly(A) tails of RNA and the activity is stimulated by poly(A)-binding protein pab1. PAN deadenylation is followed by rapid degradation of the shortened mRNA tails by the CCR4-NOT complex. Deadenylated mRNAs are then degraded by two alternative mechanisms, namely exosome-mediated 3'-5' exonucleolytic degradation, or deadenylation-dependent mRNA decaping and subsequent 5'-3' exonucleolytic degradation by xrn1. May also be involved in post-transcriptional maturation of mRNA poly(A) tails. ppk26/pan3 acts as a positive regulator for PAN activity, recruiting the catalytic subunit pan2 to mRNA via its interaction with RNA and with pab1.</text>
</comment>
<comment type="subunit">
    <text evidence="1">Homodimer. Forms a heterotrimer with a catalytic subunit pan2 to form the poly(A)-nuclease (PAN) deadenylation complex. Interacts (via PAM-2 motif) with poly(A)-binding protein pab1 (via PABC domain), conferring substrate specificity of the enzyme complex.</text>
</comment>
<comment type="subcellular location">
    <subcellularLocation>
        <location evidence="1 3">Cytoplasm</location>
    </subcellularLocation>
    <subcellularLocation>
        <location evidence="3">Nucleus</location>
    </subcellularLocation>
</comment>
<comment type="domain">
    <text evidence="1">The N-terminal zinc finger binds to poly(A) RNA.</text>
</comment>
<comment type="domain">
    <text evidence="1">Contains a pseudokinase domain. The protein kinase domain is predicted to be catalytically inactive because some of the residues important for catalytic activity are substituted and it lacks the equivalent of the binding site for a peptide substrate. However, it has retained an ATP-binding site and ATP-binding is required for mRNA degradation, stimulating the activity of the PAN2 nuclease in vitro. The nucleotide-binding site is juxtaposed to the RNase active site of pan2 in the complex and may actually bind nucleosides of a poly(A) RNA rather than ATP, feeding the poly(A)-tail to the active site of the deadenylase and thus increasing the efficiency with which this distributive enzyme degrades oligo(A) RNAs.</text>
</comment>
<comment type="domain">
    <text evidence="1">The pseudokinase domain, the coiled-coil (CC), and C-terminal knob domain (CK) form a structural unit (PKC) that forms an extensive high-affinity interaction surface for pan2.</text>
</comment>
<comment type="similarity">
    <text evidence="1">Belongs to the protein kinase superfamily. PAN3 family.</text>
</comment>
<organism>
    <name type="scientific">Schizosaccharomyces pombe (strain 972 / ATCC 24843)</name>
    <name type="common">Fission yeast</name>
    <dbReference type="NCBI Taxonomy" id="284812"/>
    <lineage>
        <taxon>Eukaryota</taxon>
        <taxon>Fungi</taxon>
        <taxon>Dikarya</taxon>
        <taxon>Ascomycota</taxon>
        <taxon>Taphrinomycotina</taxon>
        <taxon>Schizosaccharomycetes</taxon>
        <taxon>Schizosaccharomycetales</taxon>
        <taxon>Schizosaccharomycetaceae</taxon>
        <taxon>Schizosaccharomyces</taxon>
    </lineage>
</organism>
<proteinExistence type="inferred from homology"/>